<feature type="signal peptide" evidence="2">
    <location>
        <begin position="1"/>
        <end position="17"/>
    </location>
</feature>
<feature type="chain" id="PRO_0000101366" description="Uncharacterized lipoprotein RP413">
    <location>
        <begin position="18"/>
        <end position="219"/>
    </location>
</feature>
<feature type="region of interest" description="Disordered" evidence="3">
    <location>
        <begin position="110"/>
        <end position="136"/>
    </location>
</feature>
<feature type="coiled-coil region" evidence="1">
    <location>
        <begin position="137"/>
        <end position="165"/>
    </location>
</feature>
<feature type="compositionally biased region" description="Polar residues" evidence="3">
    <location>
        <begin position="112"/>
        <end position="126"/>
    </location>
</feature>
<feature type="lipid moiety-binding region" description="N-palmitoyl cysteine" evidence="2">
    <location>
        <position position="18"/>
    </location>
</feature>
<feature type="lipid moiety-binding region" description="S-diacylglycerol cysteine" evidence="2">
    <location>
        <position position="18"/>
    </location>
</feature>
<dbReference type="EMBL" id="AJ235271">
    <property type="protein sequence ID" value="CAA14870.1"/>
    <property type="molecule type" value="Genomic_DNA"/>
</dbReference>
<dbReference type="PIR" id="D71699">
    <property type="entry name" value="D71699"/>
</dbReference>
<dbReference type="RefSeq" id="NP_220794.1">
    <property type="nucleotide sequence ID" value="NC_000963.1"/>
</dbReference>
<dbReference type="RefSeq" id="WP_004599457.1">
    <property type="nucleotide sequence ID" value="NC_000963.1"/>
</dbReference>
<dbReference type="SMR" id="Q9ZDB9"/>
<dbReference type="STRING" id="272947.gene:17555493"/>
<dbReference type="EnsemblBacteria" id="CAA14870">
    <property type="protein sequence ID" value="CAA14870"/>
    <property type="gene ID" value="CAA14870"/>
</dbReference>
<dbReference type="KEGG" id="rpr:RP413"/>
<dbReference type="PATRIC" id="fig|272947.5.peg.426"/>
<dbReference type="HOGENOM" id="CLU_1276797_0_0_5"/>
<dbReference type="OrthoDB" id="7161167at2"/>
<dbReference type="Proteomes" id="UP000002480">
    <property type="component" value="Chromosome"/>
</dbReference>
<dbReference type="GO" id="GO:0005886">
    <property type="term" value="C:plasma membrane"/>
    <property type="evidence" value="ECO:0007669"/>
    <property type="project" value="UniProtKB-SubCell"/>
</dbReference>
<dbReference type="PROSITE" id="PS51257">
    <property type="entry name" value="PROKAR_LIPOPROTEIN"/>
    <property type="match status" value="1"/>
</dbReference>
<proteinExistence type="inferred from homology"/>
<organism>
    <name type="scientific">Rickettsia prowazekii (strain Madrid E)</name>
    <dbReference type="NCBI Taxonomy" id="272947"/>
    <lineage>
        <taxon>Bacteria</taxon>
        <taxon>Pseudomonadati</taxon>
        <taxon>Pseudomonadota</taxon>
        <taxon>Alphaproteobacteria</taxon>
        <taxon>Rickettsiales</taxon>
        <taxon>Rickettsiaceae</taxon>
        <taxon>Rickettsieae</taxon>
        <taxon>Rickettsia</taxon>
        <taxon>typhus group</taxon>
    </lineage>
</organism>
<name>Y413_RICPR</name>
<evidence type="ECO:0000255" key="1"/>
<evidence type="ECO:0000255" key="2">
    <source>
        <dbReference type="PROSITE-ProRule" id="PRU00303"/>
    </source>
</evidence>
<evidence type="ECO:0000256" key="3">
    <source>
        <dbReference type="SAM" id="MobiDB-lite"/>
    </source>
</evidence>
<gene>
    <name type="ordered locus">RP413</name>
</gene>
<keyword id="KW-1003">Cell membrane</keyword>
<keyword id="KW-0175">Coiled coil</keyword>
<keyword id="KW-0449">Lipoprotein</keyword>
<keyword id="KW-0472">Membrane</keyword>
<keyword id="KW-0564">Palmitate</keyword>
<keyword id="KW-1185">Reference proteome</keyword>
<keyword id="KW-0732">Signal</keyword>
<protein>
    <recommendedName>
        <fullName>Uncharacterized lipoprotein RP413</fullName>
    </recommendedName>
</protein>
<reference key="1">
    <citation type="journal article" date="1998" name="Nature">
        <title>The genome sequence of Rickettsia prowazekii and the origin of mitochondria.</title>
        <authorList>
            <person name="Andersson S.G.E."/>
            <person name="Zomorodipour A."/>
            <person name="Andersson J.O."/>
            <person name="Sicheritz-Ponten T."/>
            <person name="Alsmark U.C.M."/>
            <person name="Podowski R.M."/>
            <person name="Naeslund A.K."/>
            <person name="Eriksson A.-S."/>
            <person name="Winkler H.H."/>
            <person name="Kurland C.G."/>
        </authorList>
    </citation>
    <scope>NUCLEOTIDE SEQUENCE [LARGE SCALE GENOMIC DNA]</scope>
    <source>
        <strain>Madrid E</strain>
    </source>
</reference>
<sequence>MFKKIIILFLGIFLLSSCTDNFRNYFQRSANNKLLDIKGAKGGKRKPVYNNKYIDLAKKNILEDNIDDDDNDSDANYDSDSLLIGEKIDNIKKNREMYINMIKRDIARQKAESNATQSNNDMTLSKANKKVRKDDSYKEKKIEEELNQIKAMLRETKRDITKYTCPNATVNQNYVPPVTNYENENYPPIKNSRPYNNTSKVKQKFIREDDDNTSNACSI</sequence>
<comment type="subcellular location">
    <subcellularLocation>
        <location evidence="2">Cell membrane</location>
        <topology evidence="2">Lipid-anchor</topology>
    </subcellularLocation>
</comment>
<accession>Q9ZDB9</accession>